<keyword id="KW-0067">ATP-binding</keyword>
<keyword id="KW-0460">Magnesium</keyword>
<keyword id="KW-0547">Nucleotide-binding</keyword>
<keyword id="KW-1185">Reference proteome</keyword>
<keyword id="KW-0808">Transferase</keyword>
<keyword id="KW-0819">tRNA processing</keyword>
<reference key="1">
    <citation type="journal article" date="2009" name="BMC Genomics">
        <title>Complete genome sequence of the sugarcane nitrogen-fixing endophyte Gluconacetobacter diazotrophicus Pal5.</title>
        <authorList>
            <person name="Bertalan M."/>
            <person name="Albano R."/>
            <person name="de Padua V."/>
            <person name="Rouws L."/>
            <person name="Rojas C."/>
            <person name="Hemerly A."/>
            <person name="Teixeira K."/>
            <person name="Schwab S."/>
            <person name="Araujo J."/>
            <person name="Oliveira A."/>
            <person name="Franca L."/>
            <person name="Magalhaes V."/>
            <person name="Alqueres S."/>
            <person name="Cardoso A."/>
            <person name="Almeida W."/>
            <person name="Loureiro M.M."/>
            <person name="Nogueira E."/>
            <person name="Cidade D."/>
            <person name="Oliveira D."/>
            <person name="Simao T."/>
            <person name="Macedo J."/>
            <person name="Valadao A."/>
            <person name="Dreschsel M."/>
            <person name="Freitas F."/>
            <person name="Vidal M."/>
            <person name="Guedes H."/>
            <person name="Rodrigues E."/>
            <person name="Meneses C."/>
            <person name="Brioso P."/>
            <person name="Pozzer L."/>
            <person name="Figueiredo D."/>
            <person name="Montano H."/>
            <person name="Junior J."/>
            <person name="de Souza Filho G."/>
            <person name="Martin Quintana Flores V."/>
            <person name="Ferreira B."/>
            <person name="Branco A."/>
            <person name="Gonzalez P."/>
            <person name="Guillobel H."/>
            <person name="Lemos M."/>
            <person name="Seibel L."/>
            <person name="Macedo J."/>
            <person name="Alves-Ferreira M."/>
            <person name="Sachetto-Martins G."/>
            <person name="Coelho A."/>
            <person name="Santos E."/>
            <person name="Amaral G."/>
            <person name="Neves A."/>
            <person name="Pacheco A.B."/>
            <person name="Carvalho D."/>
            <person name="Lery L."/>
            <person name="Bisch P."/>
            <person name="Rossle S.C."/>
            <person name="Urmenyi T."/>
            <person name="Rael Pereira A."/>
            <person name="Silva R."/>
            <person name="Rondinelli E."/>
            <person name="von Kruger W."/>
            <person name="Martins O."/>
            <person name="Baldani J.I."/>
            <person name="Ferreira P.C."/>
        </authorList>
    </citation>
    <scope>NUCLEOTIDE SEQUENCE [LARGE SCALE GENOMIC DNA]</scope>
    <source>
        <strain>ATCC 49037 / DSM 5601 / CCUG 37298 / CIP 103539 / LMG 7603 / PAl5</strain>
    </source>
</reference>
<reference key="2">
    <citation type="journal article" date="2010" name="Stand. Genomic Sci.">
        <title>Two genome sequences of the same bacterial strain, Gluconacetobacter diazotrophicus PAl 5, suggest a new standard in genome sequence submission.</title>
        <authorList>
            <person name="Giongo A."/>
            <person name="Tyler H.L."/>
            <person name="Zipperer U.N."/>
            <person name="Triplett E.W."/>
        </authorList>
    </citation>
    <scope>NUCLEOTIDE SEQUENCE [LARGE SCALE GENOMIC DNA]</scope>
    <source>
        <strain>ATCC 49037 / DSM 5601 / CCUG 37298 / CIP 103539 / LMG 7603 / PAl5</strain>
    </source>
</reference>
<organism>
    <name type="scientific">Gluconacetobacter diazotrophicus (strain ATCC 49037 / DSM 5601 / CCUG 37298 / CIP 103539 / LMG 7603 / PAl5)</name>
    <dbReference type="NCBI Taxonomy" id="272568"/>
    <lineage>
        <taxon>Bacteria</taxon>
        <taxon>Pseudomonadati</taxon>
        <taxon>Pseudomonadota</taxon>
        <taxon>Alphaproteobacteria</taxon>
        <taxon>Acetobacterales</taxon>
        <taxon>Acetobacteraceae</taxon>
        <taxon>Gluconacetobacter</taxon>
    </lineage>
</organism>
<feature type="chain" id="PRO_1000077397" description="tRNA dimethylallyltransferase">
    <location>
        <begin position="1"/>
        <end position="332"/>
    </location>
</feature>
<feature type="region of interest" description="Interaction with substrate tRNA" evidence="1">
    <location>
        <begin position="42"/>
        <end position="45"/>
    </location>
</feature>
<feature type="region of interest" description="Interaction with substrate tRNA" evidence="1">
    <location>
        <begin position="166"/>
        <end position="170"/>
    </location>
</feature>
<feature type="binding site" evidence="1">
    <location>
        <begin position="17"/>
        <end position="24"/>
    </location>
    <ligand>
        <name>ATP</name>
        <dbReference type="ChEBI" id="CHEBI:30616"/>
    </ligand>
</feature>
<feature type="binding site" evidence="1">
    <location>
        <begin position="19"/>
        <end position="24"/>
    </location>
    <ligand>
        <name>substrate</name>
    </ligand>
</feature>
<feature type="site" description="Interaction with substrate tRNA" evidence="1">
    <location>
        <position position="108"/>
    </location>
</feature>
<feature type="site" description="Interaction with substrate tRNA" evidence="1">
    <location>
        <position position="130"/>
    </location>
</feature>
<feature type="sequence conflict" description="In Ref. 2; ACI51541." evidence="2" ref="2">
    <original>G</original>
    <variation>V</variation>
    <location>
        <position position="292"/>
    </location>
</feature>
<comment type="function">
    <text evidence="1">Catalyzes the transfer of a dimethylallyl group onto the adenine at position 37 in tRNAs that read codons beginning with uridine, leading to the formation of N6-(dimethylallyl)adenosine (i(6)A).</text>
</comment>
<comment type="catalytic activity">
    <reaction evidence="1">
        <text>adenosine(37) in tRNA + dimethylallyl diphosphate = N(6)-dimethylallyladenosine(37) in tRNA + diphosphate</text>
        <dbReference type="Rhea" id="RHEA:26482"/>
        <dbReference type="Rhea" id="RHEA-COMP:10162"/>
        <dbReference type="Rhea" id="RHEA-COMP:10375"/>
        <dbReference type="ChEBI" id="CHEBI:33019"/>
        <dbReference type="ChEBI" id="CHEBI:57623"/>
        <dbReference type="ChEBI" id="CHEBI:74411"/>
        <dbReference type="ChEBI" id="CHEBI:74415"/>
        <dbReference type="EC" id="2.5.1.75"/>
    </reaction>
</comment>
<comment type="cofactor">
    <cofactor evidence="1">
        <name>Mg(2+)</name>
        <dbReference type="ChEBI" id="CHEBI:18420"/>
    </cofactor>
</comment>
<comment type="subunit">
    <text evidence="1">Monomer.</text>
</comment>
<comment type="similarity">
    <text evidence="1">Belongs to the IPP transferase family.</text>
</comment>
<accession>A9GZI5</accession>
<accession>B5ZL20</accession>
<sequence>MTQAADARDRPVLVIAGPTCSGKSALAMAVARAVDGTIVNADSMQVYRDLRILTARPTPADEAECPHRLYGVLPATETGSVAWWRGRAVAEIEAAWAAGRTPILCGGTGMYLRALTDGLTDIPDPGPEARAEARRLVDAEGPAALHDRLAAVDPESAAALHPADSQRVARAWEVWSGTGHGMAHWRRTATLPPLACRRVAVRLDPPRDTLRAAIAVRFAAMVQGGALDEVRALLAQGLPPALPAMRAHGVPELAAHLRGDLTLDEATHRAVLATGRYTRRQSTWFAHHDLAGPADSLVIGTRMGGDAQQMERNYADAVSFILMRIDVGRQFP</sequence>
<evidence type="ECO:0000255" key="1">
    <source>
        <dbReference type="HAMAP-Rule" id="MF_00185"/>
    </source>
</evidence>
<evidence type="ECO:0000305" key="2"/>
<proteinExistence type="inferred from homology"/>
<dbReference type="EC" id="2.5.1.75" evidence="1"/>
<dbReference type="EMBL" id="AM889285">
    <property type="protein sequence ID" value="CAP53964.1"/>
    <property type="molecule type" value="Genomic_DNA"/>
</dbReference>
<dbReference type="EMBL" id="CP001189">
    <property type="protein sequence ID" value="ACI51541.1"/>
    <property type="molecule type" value="Genomic_DNA"/>
</dbReference>
<dbReference type="RefSeq" id="WP_012222272.1">
    <property type="nucleotide sequence ID" value="NC_010125.1"/>
</dbReference>
<dbReference type="RefSeq" id="WP_012553971.1">
    <property type="nucleotide sequence ID" value="NC_011365.1"/>
</dbReference>
<dbReference type="SMR" id="A9GZI5"/>
<dbReference type="STRING" id="272568.GDI0021"/>
<dbReference type="KEGG" id="gdi:GDI0021"/>
<dbReference type="KEGG" id="gdj:Gdia_1778"/>
<dbReference type="eggNOG" id="COG0324">
    <property type="taxonomic scope" value="Bacteria"/>
</dbReference>
<dbReference type="HOGENOM" id="CLU_032616_0_1_5"/>
<dbReference type="OrthoDB" id="9776390at2"/>
<dbReference type="Proteomes" id="UP000001176">
    <property type="component" value="Chromosome"/>
</dbReference>
<dbReference type="GO" id="GO:0005524">
    <property type="term" value="F:ATP binding"/>
    <property type="evidence" value="ECO:0007669"/>
    <property type="project" value="UniProtKB-UniRule"/>
</dbReference>
<dbReference type="GO" id="GO:0052381">
    <property type="term" value="F:tRNA dimethylallyltransferase activity"/>
    <property type="evidence" value="ECO:0007669"/>
    <property type="project" value="UniProtKB-UniRule"/>
</dbReference>
<dbReference type="GO" id="GO:0006400">
    <property type="term" value="P:tRNA modification"/>
    <property type="evidence" value="ECO:0007669"/>
    <property type="project" value="TreeGrafter"/>
</dbReference>
<dbReference type="Gene3D" id="1.10.20.140">
    <property type="match status" value="1"/>
</dbReference>
<dbReference type="Gene3D" id="3.40.50.300">
    <property type="entry name" value="P-loop containing nucleotide triphosphate hydrolases"/>
    <property type="match status" value="1"/>
</dbReference>
<dbReference type="HAMAP" id="MF_00185">
    <property type="entry name" value="IPP_trans"/>
    <property type="match status" value="1"/>
</dbReference>
<dbReference type="InterPro" id="IPR039657">
    <property type="entry name" value="Dimethylallyltransferase"/>
</dbReference>
<dbReference type="InterPro" id="IPR018022">
    <property type="entry name" value="IPT"/>
</dbReference>
<dbReference type="InterPro" id="IPR027417">
    <property type="entry name" value="P-loop_NTPase"/>
</dbReference>
<dbReference type="NCBIfam" id="TIGR00174">
    <property type="entry name" value="miaA"/>
    <property type="match status" value="1"/>
</dbReference>
<dbReference type="PANTHER" id="PTHR11088">
    <property type="entry name" value="TRNA DIMETHYLALLYLTRANSFERASE"/>
    <property type="match status" value="1"/>
</dbReference>
<dbReference type="PANTHER" id="PTHR11088:SF60">
    <property type="entry name" value="TRNA DIMETHYLALLYLTRANSFERASE"/>
    <property type="match status" value="1"/>
</dbReference>
<dbReference type="Pfam" id="PF01715">
    <property type="entry name" value="IPPT"/>
    <property type="match status" value="1"/>
</dbReference>
<dbReference type="SUPFAM" id="SSF52540">
    <property type="entry name" value="P-loop containing nucleoside triphosphate hydrolases"/>
    <property type="match status" value="1"/>
</dbReference>
<gene>
    <name evidence="1" type="primary">miaA</name>
    <name type="ordered locus">GDI0021</name>
    <name type="ordered locus">Gdia_1778</name>
</gene>
<name>MIAA_GLUDA</name>
<protein>
    <recommendedName>
        <fullName evidence="1">tRNA dimethylallyltransferase</fullName>
        <ecNumber evidence="1">2.5.1.75</ecNumber>
    </recommendedName>
    <alternativeName>
        <fullName evidence="1">Dimethylallyl diphosphate:tRNA dimethylallyltransferase</fullName>
        <shortName evidence="1">DMAPP:tRNA dimethylallyltransferase</shortName>
        <shortName evidence="1">DMATase</shortName>
    </alternativeName>
    <alternativeName>
        <fullName evidence="1">Isopentenyl-diphosphate:tRNA isopentenyltransferase</fullName>
        <shortName evidence="1">IPP transferase</shortName>
        <shortName evidence="1">IPPT</shortName>
        <shortName evidence="1">IPTase</shortName>
    </alternativeName>
</protein>